<comment type="function">
    <text evidence="1">Binds directly to 23S rRNA. The L1 stalk is quite mobile in the ribosome, and is involved in E site tRNA release.</text>
</comment>
<comment type="function">
    <text evidence="1">Protein L1 is also a translational repressor protein, it controls the translation of the L11 operon by binding to its mRNA.</text>
</comment>
<comment type="subunit">
    <text evidence="1">Part of the 50S ribosomal subunit.</text>
</comment>
<comment type="similarity">
    <text evidence="1">Belongs to the universal ribosomal protein uL1 family.</text>
</comment>
<gene>
    <name evidence="1" type="primary">rplA</name>
    <name type="ordered locus">SAS0496</name>
</gene>
<protein>
    <recommendedName>
        <fullName evidence="1">Large ribosomal subunit protein uL1</fullName>
    </recommendedName>
    <alternativeName>
        <fullName evidence="2">50S ribosomal protein L1</fullName>
    </alternativeName>
</protein>
<sequence>MAKKGKKYQEAASKVDRTQHYSVEEAIKLAKETSIANFDASVEVAFRLGIDTRKNDQQIRGAVVLPNGTGKSQSVLVFAKGDKIAEAEAAGADYVGEAEYVQKIQQGWFDFDVVVATPDMMGEVGKLGRVLGPKGLMPNPKTGTVTMDVKKAVEEIKAGKVEYRAEKAGIVHASIGKVSFTDEQLIENFNTLQDVLAKAKPSSAKGTYFKSVAVTTTMGPGVKIDTASFK</sequence>
<keyword id="KW-0678">Repressor</keyword>
<keyword id="KW-0687">Ribonucleoprotein</keyword>
<keyword id="KW-0689">Ribosomal protein</keyword>
<keyword id="KW-0694">RNA-binding</keyword>
<keyword id="KW-0699">rRNA-binding</keyword>
<keyword id="KW-0810">Translation regulation</keyword>
<keyword id="KW-0820">tRNA-binding</keyword>
<feature type="chain" id="PRO_0000125734" description="Large ribosomal subunit protein uL1">
    <location>
        <begin position="1"/>
        <end position="230"/>
    </location>
</feature>
<accession>Q6GBU9</accession>
<organism>
    <name type="scientific">Staphylococcus aureus (strain MSSA476)</name>
    <dbReference type="NCBI Taxonomy" id="282459"/>
    <lineage>
        <taxon>Bacteria</taxon>
        <taxon>Bacillati</taxon>
        <taxon>Bacillota</taxon>
        <taxon>Bacilli</taxon>
        <taxon>Bacillales</taxon>
        <taxon>Staphylococcaceae</taxon>
        <taxon>Staphylococcus</taxon>
    </lineage>
</organism>
<dbReference type="EMBL" id="BX571857">
    <property type="protein sequence ID" value="CAG42271.1"/>
    <property type="molecule type" value="Genomic_DNA"/>
</dbReference>
<dbReference type="RefSeq" id="WP_001074619.1">
    <property type="nucleotide sequence ID" value="NC_002953.3"/>
</dbReference>
<dbReference type="SMR" id="Q6GBU9"/>
<dbReference type="GeneID" id="98344872"/>
<dbReference type="KEGG" id="sas:SAS0496"/>
<dbReference type="HOGENOM" id="CLU_062853_0_0_9"/>
<dbReference type="GO" id="GO:0015934">
    <property type="term" value="C:large ribosomal subunit"/>
    <property type="evidence" value="ECO:0007669"/>
    <property type="project" value="InterPro"/>
</dbReference>
<dbReference type="GO" id="GO:0019843">
    <property type="term" value="F:rRNA binding"/>
    <property type="evidence" value="ECO:0007669"/>
    <property type="project" value="UniProtKB-UniRule"/>
</dbReference>
<dbReference type="GO" id="GO:0003735">
    <property type="term" value="F:structural constituent of ribosome"/>
    <property type="evidence" value="ECO:0007669"/>
    <property type="project" value="InterPro"/>
</dbReference>
<dbReference type="GO" id="GO:0000049">
    <property type="term" value="F:tRNA binding"/>
    <property type="evidence" value="ECO:0007669"/>
    <property type="project" value="UniProtKB-KW"/>
</dbReference>
<dbReference type="GO" id="GO:0006417">
    <property type="term" value="P:regulation of translation"/>
    <property type="evidence" value="ECO:0007669"/>
    <property type="project" value="UniProtKB-KW"/>
</dbReference>
<dbReference type="GO" id="GO:0006412">
    <property type="term" value="P:translation"/>
    <property type="evidence" value="ECO:0007669"/>
    <property type="project" value="UniProtKB-UniRule"/>
</dbReference>
<dbReference type="CDD" id="cd00403">
    <property type="entry name" value="Ribosomal_L1"/>
    <property type="match status" value="1"/>
</dbReference>
<dbReference type="FunFam" id="3.40.50.790:FF:000001">
    <property type="entry name" value="50S ribosomal protein L1"/>
    <property type="match status" value="1"/>
</dbReference>
<dbReference type="Gene3D" id="3.30.190.20">
    <property type="match status" value="1"/>
</dbReference>
<dbReference type="Gene3D" id="3.40.50.790">
    <property type="match status" value="1"/>
</dbReference>
<dbReference type="HAMAP" id="MF_01318_B">
    <property type="entry name" value="Ribosomal_uL1_B"/>
    <property type="match status" value="1"/>
</dbReference>
<dbReference type="InterPro" id="IPR005878">
    <property type="entry name" value="Ribosom_uL1_bac-type"/>
</dbReference>
<dbReference type="InterPro" id="IPR002143">
    <property type="entry name" value="Ribosomal_uL1"/>
</dbReference>
<dbReference type="InterPro" id="IPR023674">
    <property type="entry name" value="Ribosomal_uL1-like"/>
</dbReference>
<dbReference type="InterPro" id="IPR028364">
    <property type="entry name" value="Ribosomal_uL1/biogenesis"/>
</dbReference>
<dbReference type="InterPro" id="IPR016095">
    <property type="entry name" value="Ribosomal_uL1_3-a/b-sand"/>
</dbReference>
<dbReference type="InterPro" id="IPR023673">
    <property type="entry name" value="Ribosomal_uL1_CS"/>
</dbReference>
<dbReference type="NCBIfam" id="TIGR01169">
    <property type="entry name" value="rplA_bact"/>
    <property type="match status" value="1"/>
</dbReference>
<dbReference type="PANTHER" id="PTHR36427">
    <property type="entry name" value="54S RIBOSOMAL PROTEIN L1, MITOCHONDRIAL"/>
    <property type="match status" value="1"/>
</dbReference>
<dbReference type="PANTHER" id="PTHR36427:SF3">
    <property type="entry name" value="LARGE RIBOSOMAL SUBUNIT PROTEIN UL1M"/>
    <property type="match status" value="1"/>
</dbReference>
<dbReference type="Pfam" id="PF00687">
    <property type="entry name" value="Ribosomal_L1"/>
    <property type="match status" value="1"/>
</dbReference>
<dbReference type="PIRSF" id="PIRSF002155">
    <property type="entry name" value="Ribosomal_L1"/>
    <property type="match status" value="1"/>
</dbReference>
<dbReference type="SUPFAM" id="SSF56808">
    <property type="entry name" value="Ribosomal protein L1"/>
    <property type="match status" value="1"/>
</dbReference>
<dbReference type="PROSITE" id="PS01199">
    <property type="entry name" value="RIBOSOMAL_L1"/>
    <property type="match status" value="1"/>
</dbReference>
<name>RL1_STAAS</name>
<evidence type="ECO:0000255" key="1">
    <source>
        <dbReference type="HAMAP-Rule" id="MF_01318"/>
    </source>
</evidence>
<evidence type="ECO:0000305" key="2"/>
<proteinExistence type="inferred from homology"/>
<reference key="1">
    <citation type="journal article" date="2004" name="Proc. Natl. Acad. Sci. U.S.A.">
        <title>Complete genomes of two clinical Staphylococcus aureus strains: evidence for the rapid evolution of virulence and drug resistance.</title>
        <authorList>
            <person name="Holden M.T.G."/>
            <person name="Feil E.J."/>
            <person name="Lindsay J.A."/>
            <person name="Peacock S.J."/>
            <person name="Day N.P.J."/>
            <person name="Enright M.C."/>
            <person name="Foster T.J."/>
            <person name="Moore C.E."/>
            <person name="Hurst L."/>
            <person name="Atkin R."/>
            <person name="Barron A."/>
            <person name="Bason N."/>
            <person name="Bentley S.D."/>
            <person name="Chillingworth C."/>
            <person name="Chillingworth T."/>
            <person name="Churcher C."/>
            <person name="Clark L."/>
            <person name="Corton C."/>
            <person name="Cronin A."/>
            <person name="Doggett J."/>
            <person name="Dowd L."/>
            <person name="Feltwell T."/>
            <person name="Hance Z."/>
            <person name="Harris B."/>
            <person name="Hauser H."/>
            <person name="Holroyd S."/>
            <person name="Jagels K."/>
            <person name="James K.D."/>
            <person name="Lennard N."/>
            <person name="Line A."/>
            <person name="Mayes R."/>
            <person name="Moule S."/>
            <person name="Mungall K."/>
            <person name="Ormond D."/>
            <person name="Quail M.A."/>
            <person name="Rabbinowitsch E."/>
            <person name="Rutherford K.M."/>
            <person name="Sanders M."/>
            <person name="Sharp S."/>
            <person name="Simmonds M."/>
            <person name="Stevens K."/>
            <person name="Whitehead S."/>
            <person name="Barrell B.G."/>
            <person name="Spratt B.G."/>
            <person name="Parkhill J."/>
        </authorList>
    </citation>
    <scope>NUCLEOTIDE SEQUENCE [LARGE SCALE GENOMIC DNA]</scope>
    <source>
        <strain>MSSA476</strain>
    </source>
</reference>